<evidence type="ECO:0000305" key="1"/>
<proteinExistence type="inferred from homology"/>
<sequence length="147" mass="16960">MTADKYTVAINENALKILGEIVFLMGASQNFAKYPVSFIINYLLPSIYLNQYRIYRTVKDNKPIGFACWAFINDQVEKELIENDINLSVEERNSGENIYVLYFIAPFGHAKQIVHDLKNNIFPNKIVKGLRLDKDGKKVLRVATYYC</sequence>
<organism>
    <name type="scientific">Synechocystis sp. (strain ATCC 27184 / PCC 6803 / Kazusa)</name>
    <dbReference type="NCBI Taxonomy" id="1111708"/>
    <lineage>
        <taxon>Bacteria</taxon>
        <taxon>Bacillati</taxon>
        <taxon>Cyanobacteriota</taxon>
        <taxon>Cyanophyceae</taxon>
        <taxon>Synechococcales</taxon>
        <taxon>Merismopediaceae</taxon>
        <taxon>Synechocystis</taxon>
    </lineage>
</organism>
<gene>
    <name type="ordered locus">sll0720</name>
</gene>
<accession>P74650</accession>
<comment type="similarity">
    <text evidence="1">Belongs to the RTX toxin acyltransferase family.</text>
</comment>
<reference key="1">
    <citation type="journal article" date="1996" name="DNA Res.">
        <title>Sequence analysis of the genome of the unicellular cyanobacterium Synechocystis sp. strain PCC6803. II. Sequence determination of the entire genome and assignment of potential protein-coding regions.</title>
        <authorList>
            <person name="Kaneko T."/>
            <person name="Sato S."/>
            <person name="Kotani H."/>
            <person name="Tanaka A."/>
            <person name="Asamizu E."/>
            <person name="Nakamura Y."/>
            <person name="Miyajima N."/>
            <person name="Hirosawa M."/>
            <person name="Sugiura M."/>
            <person name="Sasamoto S."/>
            <person name="Kimura T."/>
            <person name="Hosouchi T."/>
            <person name="Matsuno A."/>
            <person name="Muraki A."/>
            <person name="Nakazaki N."/>
            <person name="Naruo K."/>
            <person name="Okumura S."/>
            <person name="Shimpo S."/>
            <person name="Takeuchi C."/>
            <person name="Wada T."/>
            <person name="Watanabe A."/>
            <person name="Yamada M."/>
            <person name="Yasuda M."/>
            <person name="Tabata S."/>
        </authorList>
    </citation>
    <scope>NUCLEOTIDE SEQUENCE [LARGE SCALE GENOMIC DNA]</scope>
    <source>
        <strain>ATCC 27184 / PCC 6803 / Kazusa</strain>
    </source>
</reference>
<feature type="chain" id="PRO_0000217891" description="Uncharacterized protein sll0720">
    <location>
        <begin position="1"/>
        <end position="147"/>
    </location>
</feature>
<name>Y720_SYNY3</name>
<dbReference type="EMBL" id="BA000022">
    <property type="protein sequence ID" value="BAA18766.1"/>
    <property type="molecule type" value="Genomic_DNA"/>
</dbReference>
<dbReference type="PIR" id="S76854">
    <property type="entry name" value="S76854"/>
</dbReference>
<dbReference type="SMR" id="P74650"/>
<dbReference type="STRING" id="1148.gene:10500538"/>
<dbReference type="PaxDb" id="1148-1653856"/>
<dbReference type="EnsemblBacteria" id="BAA18766">
    <property type="protein sequence ID" value="BAA18766"/>
    <property type="gene ID" value="BAA18766"/>
</dbReference>
<dbReference type="KEGG" id="syn:sll0720"/>
<dbReference type="eggNOG" id="COG2994">
    <property type="taxonomic scope" value="Bacteria"/>
</dbReference>
<dbReference type="InParanoid" id="P74650"/>
<dbReference type="Proteomes" id="UP000001425">
    <property type="component" value="Chromosome"/>
</dbReference>
<dbReference type="GO" id="GO:0005737">
    <property type="term" value="C:cytoplasm"/>
    <property type="evidence" value="ECO:0007669"/>
    <property type="project" value="InterPro"/>
</dbReference>
<dbReference type="GO" id="GO:0016746">
    <property type="term" value="F:acyltransferase activity"/>
    <property type="evidence" value="ECO:0007669"/>
    <property type="project" value="InterPro"/>
</dbReference>
<dbReference type="GO" id="GO:0009404">
    <property type="term" value="P:toxin metabolic process"/>
    <property type="evidence" value="ECO:0007669"/>
    <property type="project" value="InterPro"/>
</dbReference>
<dbReference type="InterPro" id="IPR003996">
    <property type="entry name" value="RTX_toxin-activating_protC_bac"/>
</dbReference>
<dbReference type="Pfam" id="PF02794">
    <property type="entry name" value="HlyC"/>
    <property type="match status" value="1"/>
</dbReference>
<protein>
    <recommendedName>
        <fullName>Uncharacterized protein sll0720</fullName>
    </recommendedName>
</protein>
<keyword id="KW-1185">Reference proteome</keyword>